<sequence>MIVFISLFTLFLTLLSILTNNVIVWWSIFLLMTVVFILLNKSSKSYTSIFNYFVIQESLGLLFLLCSGGLLQFFIILLKIGVAPLHFWIFNVTNNIFNYGLMWFLTFQKLPFLTILLQIFWLSSVYILLFGLLICYVQIFVMKSYKNLLIISSTESFNWIVLGVFFSMFNTFYLFIYYFVLMVLLISKFSKTSGYNFINWETTLVFLNIPFSVSFFVKIFSLSEIFKYDSFFTLFLLFTMFLSVLAFSFWLINLSMKNNEETSNNNKMNYFIIFPLMVISII</sequence>
<comment type="function">
    <text evidence="1">Core subunit of the mitochondrial membrane respiratory chain NADH dehydrogenase (Complex I) that is believed to belong to the minimal assembly required for catalysis. Complex I functions in the transfer of electrons from NADH to the respiratory chain. The immediate electron acceptor for the enzyme is believed to be ubiquinone (By similarity).</text>
</comment>
<comment type="catalytic activity">
    <reaction>
        <text>a ubiquinone + NADH + 5 H(+)(in) = a ubiquinol + NAD(+) + 4 H(+)(out)</text>
        <dbReference type="Rhea" id="RHEA:29091"/>
        <dbReference type="Rhea" id="RHEA-COMP:9565"/>
        <dbReference type="Rhea" id="RHEA-COMP:9566"/>
        <dbReference type="ChEBI" id="CHEBI:15378"/>
        <dbReference type="ChEBI" id="CHEBI:16389"/>
        <dbReference type="ChEBI" id="CHEBI:17976"/>
        <dbReference type="ChEBI" id="CHEBI:57540"/>
        <dbReference type="ChEBI" id="CHEBI:57945"/>
        <dbReference type="EC" id="7.1.1.2"/>
    </reaction>
</comment>
<comment type="subcellular location">
    <subcellularLocation>
        <location>Mitochondrion inner membrane</location>
        <topology>Multi-pass membrane protein</topology>
    </subcellularLocation>
</comment>
<comment type="similarity">
    <text evidence="4">Belongs to the complex I subunit 2 family.</text>
</comment>
<reference key="1">
    <citation type="journal article" date="2003" name="Mol. Biol. Evol.">
        <title>Phylogenetics in Caenorhabditis elegans: an analysis of divergence and outcrossing.</title>
        <authorList>
            <person name="Denver D.R."/>
            <person name="Morris K."/>
            <person name="Thomas W.K."/>
        </authorList>
    </citation>
    <scope>NUCLEOTIDE SEQUENCE [GENOMIC DNA]</scope>
    <scope>VARIANTS PHE-66; TYR-112 AND SER-194</scope>
    <source>
        <strain>AB1</strain>
        <strain>AB2</strain>
        <strain>Bristol N2</strain>
        <strain>CB4852</strain>
        <strain>CB4853</strain>
        <strain>CB4854</strain>
        <strain>CB4855</strain>
        <strain>CB4856</strain>
        <strain>CB4857</strain>
        <strain>CB4858</strain>
        <strain>KR314</strain>
        <strain>PB303</strain>
        <strain>PB306</strain>
        <strain>RW7000</strain>
        <strain>TR403</strain>
    </source>
</reference>
<reference key="2">
    <citation type="journal article" date="1992" name="Genetics">
        <title>The mitochondrial genomes of two nematodes, Caenorhabditis elegans and Ascaris suum.</title>
        <authorList>
            <person name="Okimoto R."/>
            <person name="Macfarlane J.L."/>
            <person name="Clary D.O."/>
            <person name="Wolstenholme D.R."/>
        </authorList>
    </citation>
    <scope>NUCLEOTIDE SEQUENCE [LARGE SCALE GENOMIC DNA]</scope>
    <source>
        <strain>Bristol N2</strain>
    </source>
</reference>
<reference key="3">
    <citation type="journal article" date="1990" name="Nucleic Acids Res.">
        <title>Evidence for the frequent use of TTG as the translation initiation codon of mitochondrial protein genes in the nematodes, Ascaris suum and Caenorhabditis elegans.</title>
        <authorList>
            <person name="Okimoto R."/>
            <person name="Macfarlane J.L."/>
            <person name="Wolstenholme D.R."/>
        </authorList>
    </citation>
    <scope>NUCLEOTIDE SEQUENCE [GENOMIC DNA] OF 1-25</scope>
</reference>
<feature type="chain" id="PRO_0000117564" description="NADH-ubiquinone oxidoreductase chain 2">
    <location>
        <begin position="1"/>
        <end position="282"/>
    </location>
</feature>
<feature type="transmembrane region" description="Helical" evidence="2">
    <location>
        <begin position="17"/>
        <end position="37"/>
    </location>
</feature>
<feature type="transmembrane region" description="Helical" evidence="2">
    <location>
        <begin position="58"/>
        <end position="78"/>
    </location>
</feature>
<feature type="transmembrane region" description="Helical" evidence="2">
    <location>
        <begin position="87"/>
        <end position="107"/>
    </location>
</feature>
<feature type="transmembrane region" description="Helical" evidence="2">
    <location>
        <begin position="115"/>
        <end position="135"/>
    </location>
</feature>
<feature type="transmembrane region" description="Helical" evidence="2">
    <location>
        <begin position="166"/>
        <end position="186"/>
    </location>
</feature>
<feature type="transmembrane region" description="Helical" evidence="2">
    <location>
        <begin position="202"/>
        <end position="222"/>
    </location>
</feature>
<feature type="transmembrane region" description="Helical" evidence="2">
    <location>
        <begin position="232"/>
        <end position="252"/>
    </location>
</feature>
<feature type="sequence variant" description="In strain: AB1, AB2, CB4852, CB4853, CB4854, CB4855, CB4857, CB4858, KR314 and PB306." evidence="3">
    <original>C</original>
    <variation>F</variation>
    <location>
        <position position="66"/>
    </location>
</feature>
<feature type="sequence variant" description="In strain: CB4855." evidence="3">
    <original>F</original>
    <variation>Y</variation>
    <location>
        <position position="112"/>
    </location>
</feature>
<feature type="sequence variant" description="In strain: AB1, AB2, CB4852, CB4853, CB4854, CB4855, CB4857, CB4858, KR314 and PB306." evidence="3">
    <original>G</original>
    <variation>S</variation>
    <location>
        <position position="194"/>
    </location>
</feature>
<name>NU2M_CAEEL</name>
<evidence type="ECO:0000250" key="1"/>
<evidence type="ECO:0000255" key="2"/>
<evidence type="ECO:0000269" key="3">
    <source>
    </source>
</evidence>
<evidence type="ECO:0000305" key="4"/>
<evidence type="ECO:0000312" key="5">
    <source>
        <dbReference type="WormBase" id="MTCE.16"/>
    </source>
</evidence>
<proteinExistence type="inferred from homology"/>
<geneLocation type="mitochondrion"/>
<dbReference type="EC" id="7.1.1.2"/>
<dbReference type="EMBL" id="AY171163">
    <property type="protein sequence ID" value="AAO16340.1"/>
    <property type="molecule type" value="Genomic_DNA"/>
</dbReference>
<dbReference type="EMBL" id="AY171164">
    <property type="protein sequence ID" value="AAO16341.1"/>
    <property type="molecule type" value="Genomic_DNA"/>
</dbReference>
<dbReference type="EMBL" id="AY171165">
    <property type="protein sequence ID" value="AAO16342.1"/>
    <property type="molecule type" value="Genomic_DNA"/>
</dbReference>
<dbReference type="EMBL" id="AY171166">
    <property type="protein sequence ID" value="AAO16343.1"/>
    <property type="molecule type" value="Genomic_DNA"/>
</dbReference>
<dbReference type="EMBL" id="AY171167">
    <property type="protein sequence ID" value="AAO16344.1"/>
    <property type="molecule type" value="Genomic_DNA"/>
</dbReference>
<dbReference type="EMBL" id="AY171168">
    <property type="protein sequence ID" value="AAO16345.1"/>
    <property type="molecule type" value="Genomic_DNA"/>
</dbReference>
<dbReference type="EMBL" id="AY171169">
    <property type="protein sequence ID" value="AAO16346.1"/>
    <property type="molecule type" value="Genomic_DNA"/>
</dbReference>
<dbReference type="EMBL" id="AY171170">
    <property type="protein sequence ID" value="AAO16347.1"/>
    <property type="molecule type" value="Genomic_DNA"/>
</dbReference>
<dbReference type="EMBL" id="AY171171">
    <property type="protein sequence ID" value="AAO16348.1"/>
    <property type="molecule type" value="Genomic_DNA"/>
</dbReference>
<dbReference type="EMBL" id="AY171172">
    <property type="protein sequence ID" value="AAO16349.1"/>
    <property type="molecule type" value="Genomic_DNA"/>
</dbReference>
<dbReference type="EMBL" id="AY171173">
    <property type="protein sequence ID" value="AAO16350.1"/>
    <property type="molecule type" value="Genomic_DNA"/>
</dbReference>
<dbReference type="EMBL" id="AY171174">
    <property type="protein sequence ID" value="AAO16351.1"/>
    <property type="molecule type" value="Genomic_DNA"/>
</dbReference>
<dbReference type="EMBL" id="AY171175">
    <property type="protein sequence ID" value="AAO16352.1"/>
    <property type="molecule type" value="Genomic_DNA"/>
</dbReference>
<dbReference type="EMBL" id="AY171176">
    <property type="protein sequence ID" value="AAO16353.1"/>
    <property type="molecule type" value="Genomic_DNA"/>
</dbReference>
<dbReference type="EMBL" id="AY171177">
    <property type="protein sequence ID" value="AAO16354.1"/>
    <property type="molecule type" value="Genomic_DNA"/>
</dbReference>
<dbReference type="EMBL" id="X54252">
    <property type="protein sequence ID" value="CAA38155.1"/>
    <property type="molecule type" value="Genomic_DNA"/>
</dbReference>
<dbReference type="PIR" id="S26030">
    <property type="entry name" value="S26030"/>
</dbReference>
<dbReference type="RefSeq" id="NP_006957.1">
    <property type="nucleotide sequence ID" value="NC_001328.1"/>
</dbReference>
<dbReference type="SMR" id="P24889"/>
<dbReference type="FunCoup" id="P24889">
    <property type="interactions" value="107"/>
</dbReference>
<dbReference type="STRING" id="6239.MTCE.16.1"/>
<dbReference type="PaxDb" id="6239-MTCE.16"/>
<dbReference type="EnsemblMetazoa" id="MTCE.16.1">
    <property type="protein sequence ID" value="MTCE.16.1"/>
    <property type="gene ID" value="WBGene00010961"/>
</dbReference>
<dbReference type="GeneID" id="2565695"/>
<dbReference type="KEGG" id="cel:KEF34_p08"/>
<dbReference type="AGR" id="WB:WBGene00010961"/>
<dbReference type="CTD" id="4536"/>
<dbReference type="WormBase" id="MTCE.16">
    <property type="protein sequence ID" value="CE35347"/>
    <property type="gene ID" value="WBGene00010961"/>
    <property type="gene designation" value="nduo-2"/>
</dbReference>
<dbReference type="HOGENOM" id="CLU_987775_0_0_1"/>
<dbReference type="InParanoid" id="P24889"/>
<dbReference type="PRO" id="PR:P24889"/>
<dbReference type="Proteomes" id="UP000001940">
    <property type="component" value="Mitochondrion"/>
</dbReference>
<dbReference type="Bgee" id="WBGene00010961">
    <property type="expression patterns" value="Expressed in pharyngeal muscle cell (C elegans) and 3 other cell types or tissues"/>
</dbReference>
<dbReference type="GO" id="GO:0005743">
    <property type="term" value="C:mitochondrial inner membrane"/>
    <property type="evidence" value="ECO:0007669"/>
    <property type="project" value="UniProtKB-SubCell"/>
</dbReference>
<dbReference type="GO" id="GO:0045271">
    <property type="term" value="C:respiratory chain complex I"/>
    <property type="evidence" value="ECO:0000250"/>
    <property type="project" value="WormBase"/>
</dbReference>
<dbReference type="GO" id="GO:0008137">
    <property type="term" value="F:NADH dehydrogenase (ubiquinone) activity"/>
    <property type="evidence" value="ECO:0000303"/>
    <property type="project" value="UniProtKB"/>
</dbReference>
<dbReference type="GO" id="GO:0006120">
    <property type="term" value="P:mitochondrial electron transport, NADH to ubiquinone"/>
    <property type="evidence" value="ECO:0000303"/>
    <property type="project" value="UniProtKB"/>
</dbReference>
<keyword id="KW-0249">Electron transport</keyword>
<keyword id="KW-0472">Membrane</keyword>
<keyword id="KW-0496">Mitochondrion</keyword>
<keyword id="KW-0999">Mitochondrion inner membrane</keyword>
<keyword id="KW-0520">NAD</keyword>
<keyword id="KW-1185">Reference proteome</keyword>
<keyword id="KW-0679">Respiratory chain</keyword>
<keyword id="KW-1278">Translocase</keyword>
<keyword id="KW-0812">Transmembrane</keyword>
<keyword id="KW-1133">Transmembrane helix</keyword>
<keyword id="KW-0813">Transport</keyword>
<keyword id="KW-0830">Ubiquinone</keyword>
<organism>
    <name type="scientific">Caenorhabditis elegans</name>
    <dbReference type="NCBI Taxonomy" id="6239"/>
    <lineage>
        <taxon>Eukaryota</taxon>
        <taxon>Metazoa</taxon>
        <taxon>Ecdysozoa</taxon>
        <taxon>Nematoda</taxon>
        <taxon>Chromadorea</taxon>
        <taxon>Rhabditida</taxon>
        <taxon>Rhabditina</taxon>
        <taxon>Rhabditomorpha</taxon>
        <taxon>Rhabditoidea</taxon>
        <taxon>Rhabditidae</taxon>
        <taxon>Peloderinae</taxon>
        <taxon>Caenorhabditis</taxon>
    </lineage>
</organism>
<gene>
    <name evidence="5" type="primary">nduo-2</name>
    <name evidence="5" type="synonym">nd2</name>
    <name evidence="5" type="ORF">MTCE.16</name>
</gene>
<accession>P24889</accession>
<protein>
    <recommendedName>
        <fullName>NADH-ubiquinone oxidoreductase chain 2</fullName>
        <ecNumber>7.1.1.2</ecNumber>
    </recommendedName>
    <alternativeName>
        <fullName>NADH dehydrogenase subunit 2</fullName>
    </alternativeName>
</protein>